<keyword id="KW-0067">ATP-binding</keyword>
<keyword id="KW-1003">Cell membrane</keyword>
<keyword id="KW-0472">Membrane</keyword>
<keyword id="KW-0547">Nucleotide-binding</keyword>
<keyword id="KW-1185">Reference proteome</keyword>
<keyword id="KW-1278">Translocase</keyword>
<keyword id="KW-0813">Transport</keyword>
<proteinExistence type="inferred from homology"/>
<comment type="function">
    <text evidence="1">Part of the ABC transporter complex HmuTUV involved in hemin import. Responsible for energy coupling to the transport system.</text>
</comment>
<comment type="subunit">
    <text evidence="1">The complex is composed of two ATP-binding proteins (HmuV), two transmembrane proteins (HmuU) and a solute-binding protein (HmuT).</text>
</comment>
<comment type="subcellular location">
    <subcellularLocation>
        <location evidence="1">Cell membrane</location>
        <topology evidence="1">Peripheral membrane protein</topology>
    </subcellularLocation>
</comment>
<comment type="similarity">
    <text evidence="1">Belongs to the ABC transporter superfamily. Heme (hemin) importer (TC 3.A.1.14.5) family.</text>
</comment>
<gene>
    <name evidence="1" type="primary">hmuV</name>
    <name type="ordered locus">SCO2274</name>
    <name type="ORF">SCC75A.20</name>
</gene>
<name>HMUV_STRCO</name>
<organism>
    <name type="scientific">Streptomyces coelicolor (strain ATCC BAA-471 / A3(2) / M145)</name>
    <dbReference type="NCBI Taxonomy" id="100226"/>
    <lineage>
        <taxon>Bacteria</taxon>
        <taxon>Bacillati</taxon>
        <taxon>Actinomycetota</taxon>
        <taxon>Actinomycetes</taxon>
        <taxon>Kitasatosporales</taxon>
        <taxon>Streptomycetaceae</taxon>
        <taxon>Streptomyces</taxon>
        <taxon>Streptomyces albidoflavus group</taxon>
    </lineage>
</organism>
<reference key="1">
    <citation type="journal article" date="2002" name="Nature">
        <title>Complete genome sequence of the model actinomycete Streptomyces coelicolor A3(2).</title>
        <authorList>
            <person name="Bentley S.D."/>
            <person name="Chater K.F."/>
            <person name="Cerdeno-Tarraga A.-M."/>
            <person name="Challis G.L."/>
            <person name="Thomson N.R."/>
            <person name="James K.D."/>
            <person name="Harris D.E."/>
            <person name="Quail M.A."/>
            <person name="Kieser H."/>
            <person name="Harper D."/>
            <person name="Bateman A."/>
            <person name="Brown S."/>
            <person name="Chandra G."/>
            <person name="Chen C.W."/>
            <person name="Collins M."/>
            <person name="Cronin A."/>
            <person name="Fraser A."/>
            <person name="Goble A."/>
            <person name="Hidalgo J."/>
            <person name="Hornsby T."/>
            <person name="Howarth S."/>
            <person name="Huang C.-H."/>
            <person name="Kieser T."/>
            <person name="Larke L."/>
            <person name="Murphy L.D."/>
            <person name="Oliver K."/>
            <person name="O'Neil S."/>
            <person name="Rabbinowitsch E."/>
            <person name="Rajandream M.A."/>
            <person name="Rutherford K.M."/>
            <person name="Rutter S."/>
            <person name="Seeger K."/>
            <person name="Saunders D."/>
            <person name="Sharp S."/>
            <person name="Squares R."/>
            <person name="Squares S."/>
            <person name="Taylor K."/>
            <person name="Warren T."/>
            <person name="Wietzorrek A."/>
            <person name="Woodward J.R."/>
            <person name="Barrell B.G."/>
            <person name="Parkhill J."/>
            <person name="Hopwood D.A."/>
        </authorList>
    </citation>
    <scope>NUCLEOTIDE SEQUENCE [LARGE SCALE GENOMIC DNA]</scope>
    <source>
        <strain>ATCC BAA-471 / A3(2) / M145</strain>
    </source>
</reference>
<accession>Q9RKQ4</accession>
<protein>
    <recommendedName>
        <fullName evidence="1">Hemin import ATP-binding protein HmuV</fullName>
        <ecNumber evidence="1">7.6.2.-</ecNumber>
    </recommendedName>
</protein>
<sequence>MRGVKLPRLVPSRPVPPPPAAPGEVLAAAGGLRVHLGGRPVLDGVDVEVRAGEVLALVGPNGAGKSTLLGALAADVPAAEGVVRVHGRPVSDWSAPELALRRAVLPQSASLSFPFAVEEVVRMGRAPWAGGDRADEDEAAVAEAMARTEVAGFAGRPFSALSGGERARVALARVLAQRAPLLLLDEPTAALDLRHQELVLRLCRERARAGDAVVVVLHDLALAAAYADRVALLRSGRIAAGGPPSEVFAQGLLSEVYDQPVEVFPHPRTGALLVVPHRSP</sequence>
<dbReference type="EC" id="7.6.2.-" evidence="1"/>
<dbReference type="EMBL" id="AL939112">
    <property type="protein sequence ID" value="CAB61720.1"/>
    <property type="molecule type" value="Genomic_DNA"/>
</dbReference>
<dbReference type="PIR" id="T50583">
    <property type="entry name" value="T50583"/>
</dbReference>
<dbReference type="RefSeq" id="NP_626522.1">
    <property type="nucleotide sequence ID" value="NC_003888.3"/>
</dbReference>
<dbReference type="RefSeq" id="WP_011028243.1">
    <property type="nucleotide sequence ID" value="NZ_VNID01000001.1"/>
</dbReference>
<dbReference type="SMR" id="Q9RKQ4"/>
<dbReference type="STRING" id="100226.gene:17759871"/>
<dbReference type="PaxDb" id="100226-SCO2274"/>
<dbReference type="KEGG" id="sco:SCO2274"/>
<dbReference type="PATRIC" id="fig|100226.15.peg.2311"/>
<dbReference type="eggNOG" id="COG1120">
    <property type="taxonomic scope" value="Bacteria"/>
</dbReference>
<dbReference type="HOGENOM" id="CLU_000604_1_11_11"/>
<dbReference type="InParanoid" id="Q9RKQ4"/>
<dbReference type="OrthoDB" id="4318785at2"/>
<dbReference type="PhylomeDB" id="Q9RKQ4"/>
<dbReference type="Proteomes" id="UP000001973">
    <property type="component" value="Chromosome"/>
</dbReference>
<dbReference type="GO" id="GO:0005886">
    <property type="term" value="C:plasma membrane"/>
    <property type="evidence" value="ECO:0007669"/>
    <property type="project" value="UniProtKB-SubCell"/>
</dbReference>
<dbReference type="GO" id="GO:0005524">
    <property type="term" value="F:ATP binding"/>
    <property type="evidence" value="ECO:0007669"/>
    <property type="project" value="UniProtKB-KW"/>
</dbReference>
<dbReference type="GO" id="GO:0016887">
    <property type="term" value="F:ATP hydrolysis activity"/>
    <property type="evidence" value="ECO:0007669"/>
    <property type="project" value="InterPro"/>
</dbReference>
<dbReference type="CDD" id="cd03214">
    <property type="entry name" value="ABC_Iron-Siderophores_B12_Hemin"/>
    <property type="match status" value="1"/>
</dbReference>
<dbReference type="FunFam" id="3.40.50.300:FF:000134">
    <property type="entry name" value="Iron-enterobactin ABC transporter ATP-binding protein"/>
    <property type="match status" value="1"/>
</dbReference>
<dbReference type="Gene3D" id="3.40.50.300">
    <property type="entry name" value="P-loop containing nucleotide triphosphate hydrolases"/>
    <property type="match status" value="1"/>
</dbReference>
<dbReference type="InterPro" id="IPR003593">
    <property type="entry name" value="AAA+_ATPase"/>
</dbReference>
<dbReference type="InterPro" id="IPR003439">
    <property type="entry name" value="ABC_transporter-like_ATP-bd"/>
</dbReference>
<dbReference type="InterPro" id="IPR017871">
    <property type="entry name" value="ABC_transporter-like_CS"/>
</dbReference>
<dbReference type="InterPro" id="IPR027417">
    <property type="entry name" value="P-loop_NTPase"/>
</dbReference>
<dbReference type="NCBIfam" id="NF010068">
    <property type="entry name" value="PRK13548.1"/>
    <property type="match status" value="1"/>
</dbReference>
<dbReference type="PANTHER" id="PTHR42794">
    <property type="entry name" value="HEMIN IMPORT ATP-BINDING PROTEIN HMUV"/>
    <property type="match status" value="1"/>
</dbReference>
<dbReference type="PANTHER" id="PTHR42794:SF1">
    <property type="entry name" value="HEMIN IMPORT ATP-BINDING PROTEIN HMUV"/>
    <property type="match status" value="1"/>
</dbReference>
<dbReference type="Pfam" id="PF00005">
    <property type="entry name" value="ABC_tran"/>
    <property type="match status" value="1"/>
</dbReference>
<dbReference type="SMART" id="SM00382">
    <property type="entry name" value="AAA"/>
    <property type="match status" value="1"/>
</dbReference>
<dbReference type="SUPFAM" id="SSF52540">
    <property type="entry name" value="P-loop containing nucleoside triphosphate hydrolases"/>
    <property type="match status" value="1"/>
</dbReference>
<dbReference type="PROSITE" id="PS00211">
    <property type="entry name" value="ABC_TRANSPORTER_1"/>
    <property type="match status" value="1"/>
</dbReference>
<dbReference type="PROSITE" id="PS50893">
    <property type="entry name" value="ABC_TRANSPORTER_2"/>
    <property type="match status" value="1"/>
</dbReference>
<dbReference type="PROSITE" id="PS51261">
    <property type="entry name" value="HMUV"/>
    <property type="match status" value="1"/>
</dbReference>
<evidence type="ECO:0000255" key="1">
    <source>
        <dbReference type="HAMAP-Rule" id="MF_01718"/>
    </source>
</evidence>
<feature type="chain" id="PRO_0000269631" description="Hemin import ATP-binding protein HmuV">
    <location>
        <begin position="1"/>
        <end position="280"/>
    </location>
</feature>
<feature type="domain" description="ABC transporter" evidence="1">
    <location>
        <begin position="26"/>
        <end position="260"/>
    </location>
</feature>
<feature type="binding site" evidence="1">
    <location>
        <begin position="59"/>
        <end position="66"/>
    </location>
    <ligand>
        <name>ATP</name>
        <dbReference type="ChEBI" id="CHEBI:30616"/>
    </ligand>
</feature>